<organism>
    <name type="scientific">Rhizobium rhizogenes (strain K84 / ATCC BAA-868)</name>
    <name type="common">Agrobacterium radiobacter</name>
    <dbReference type="NCBI Taxonomy" id="311403"/>
    <lineage>
        <taxon>Bacteria</taxon>
        <taxon>Pseudomonadati</taxon>
        <taxon>Pseudomonadota</taxon>
        <taxon>Alphaproteobacteria</taxon>
        <taxon>Hyphomicrobiales</taxon>
        <taxon>Rhizobiaceae</taxon>
        <taxon>Rhizobium/Agrobacterium group</taxon>
        <taxon>Rhizobium</taxon>
    </lineage>
</organism>
<gene>
    <name evidence="1" type="primary">tdh</name>
    <name type="ordered locus">Arad_3118</name>
</gene>
<feature type="chain" id="PRO_1000147257" description="L-threonine 3-dehydrogenase">
    <location>
        <begin position="1"/>
        <end position="345"/>
    </location>
</feature>
<feature type="active site" description="Charge relay system" evidence="1">
    <location>
        <position position="44"/>
    </location>
</feature>
<feature type="active site" description="Charge relay system" evidence="1">
    <location>
        <position position="47"/>
    </location>
</feature>
<feature type="binding site" evidence="1">
    <location>
        <position position="42"/>
    </location>
    <ligand>
        <name>Zn(2+)</name>
        <dbReference type="ChEBI" id="CHEBI:29105"/>
        <label>1</label>
        <note>catalytic</note>
    </ligand>
</feature>
<feature type="binding site" evidence="1">
    <location>
        <position position="67"/>
    </location>
    <ligand>
        <name>Zn(2+)</name>
        <dbReference type="ChEBI" id="CHEBI:29105"/>
        <label>1</label>
        <note>catalytic</note>
    </ligand>
</feature>
<feature type="binding site" evidence="1">
    <location>
        <position position="68"/>
    </location>
    <ligand>
        <name>Zn(2+)</name>
        <dbReference type="ChEBI" id="CHEBI:29105"/>
        <label>1</label>
        <note>catalytic</note>
    </ligand>
</feature>
<feature type="binding site" evidence="1">
    <location>
        <position position="97"/>
    </location>
    <ligand>
        <name>Zn(2+)</name>
        <dbReference type="ChEBI" id="CHEBI:29105"/>
        <label>2</label>
    </ligand>
</feature>
<feature type="binding site" evidence="1">
    <location>
        <position position="100"/>
    </location>
    <ligand>
        <name>Zn(2+)</name>
        <dbReference type="ChEBI" id="CHEBI:29105"/>
        <label>2</label>
    </ligand>
</feature>
<feature type="binding site" evidence="1">
    <location>
        <position position="103"/>
    </location>
    <ligand>
        <name>Zn(2+)</name>
        <dbReference type="ChEBI" id="CHEBI:29105"/>
        <label>2</label>
    </ligand>
</feature>
<feature type="binding site" evidence="1">
    <location>
        <position position="111"/>
    </location>
    <ligand>
        <name>Zn(2+)</name>
        <dbReference type="ChEBI" id="CHEBI:29105"/>
        <label>2</label>
    </ligand>
</feature>
<feature type="binding site" evidence="1">
    <location>
        <position position="179"/>
    </location>
    <ligand>
        <name>NAD(+)</name>
        <dbReference type="ChEBI" id="CHEBI:57540"/>
    </ligand>
</feature>
<feature type="binding site" evidence="1">
    <location>
        <position position="199"/>
    </location>
    <ligand>
        <name>NAD(+)</name>
        <dbReference type="ChEBI" id="CHEBI:57540"/>
    </ligand>
</feature>
<feature type="binding site" evidence="1">
    <location>
        <position position="204"/>
    </location>
    <ligand>
        <name>NAD(+)</name>
        <dbReference type="ChEBI" id="CHEBI:57540"/>
    </ligand>
</feature>
<feature type="binding site" evidence="1">
    <location>
        <begin position="266"/>
        <end position="268"/>
    </location>
    <ligand>
        <name>NAD(+)</name>
        <dbReference type="ChEBI" id="CHEBI:57540"/>
    </ligand>
</feature>
<feature type="binding site" evidence="1">
    <location>
        <begin position="290"/>
        <end position="291"/>
    </location>
    <ligand>
        <name>NAD(+)</name>
        <dbReference type="ChEBI" id="CHEBI:57540"/>
    </ligand>
</feature>
<feature type="site" description="Important for catalytic activity for the proton relay mechanism but does not participate directly in the coordination of zinc atom" evidence="1">
    <location>
        <position position="152"/>
    </location>
</feature>
<evidence type="ECO:0000255" key="1">
    <source>
        <dbReference type="HAMAP-Rule" id="MF_00627"/>
    </source>
</evidence>
<proteinExistence type="inferred from homology"/>
<comment type="function">
    <text evidence="1">Catalyzes the NAD(+)-dependent oxidation of L-threonine to 2-amino-3-ketobutyrate.</text>
</comment>
<comment type="catalytic activity">
    <reaction evidence="1">
        <text>L-threonine + NAD(+) = (2S)-2-amino-3-oxobutanoate + NADH + H(+)</text>
        <dbReference type="Rhea" id="RHEA:13161"/>
        <dbReference type="ChEBI" id="CHEBI:15378"/>
        <dbReference type="ChEBI" id="CHEBI:57540"/>
        <dbReference type="ChEBI" id="CHEBI:57926"/>
        <dbReference type="ChEBI" id="CHEBI:57945"/>
        <dbReference type="ChEBI" id="CHEBI:78948"/>
        <dbReference type="EC" id="1.1.1.103"/>
    </reaction>
</comment>
<comment type="cofactor">
    <cofactor evidence="1">
        <name>Zn(2+)</name>
        <dbReference type="ChEBI" id="CHEBI:29105"/>
    </cofactor>
    <text evidence="1">Binds 2 Zn(2+) ions per subunit.</text>
</comment>
<comment type="pathway">
    <text evidence="1">Amino-acid degradation; L-threonine degradation via oxydo-reductase pathway; glycine from L-threonine: step 1/2.</text>
</comment>
<comment type="subunit">
    <text evidence="1">Homotetramer.</text>
</comment>
<comment type="subcellular location">
    <subcellularLocation>
        <location evidence="1">Cytoplasm</location>
    </subcellularLocation>
</comment>
<comment type="similarity">
    <text evidence="1">Belongs to the zinc-containing alcohol dehydrogenase family.</text>
</comment>
<name>TDH_RHIR8</name>
<accession>B9J738</accession>
<keyword id="KW-0963">Cytoplasm</keyword>
<keyword id="KW-0479">Metal-binding</keyword>
<keyword id="KW-0520">NAD</keyword>
<keyword id="KW-0560">Oxidoreductase</keyword>
<keyword id="KW-0862">Zinc</keyword>
<dbReference type="EC" id="1.1.1.103" evidence="1"/>
<dbReference type="EMBL" id="CP000628">
    <property type="protein sequence ID" value="ACM27145.1"/>
    <property type="molecule type" value="Genomic_DNA"/>
</dbReference>
<dbReference type="RefSeq" id="WP_012651899.1">
    <property type="nucleotide sequence ID" value="NC_011985.1"/>
</dbReference>
<dbReference type="SMR" id="B9J738"/>
<dbReference type="STRING" id="311403.Arad_3118"/>
<dbReference type="GeneID" id="86849018"/>
<dbReference type="KEGG" id="ara:Arad_3118"/>
<dbReference type="eggNOG" id="COG1063">
    <property type="taxonomic scope" value="Bacteria"/>
</dbReference>
<dbReference type="HOGENOM" id="CLU_026673_11_0_5"/>
<dbReference type="UniPathway" id="UPA00046">
    <property type="reaction ID" value="UER00505"/>
</dbReference>
<dbReference type="Proteomes" id="UP000001600">
    <property type="component" value="Chromosome 1"/>
</dbReference>
<dbReference type="GO" id="GO:0005737">
    <property type="term" value="C:cytoplasm"/>
    <property type="evidence" value="ECO:0007669"/>
    <property type="project" value="UniProtKB-SubCell"/>
</dbReference>
<dbReference type="GO" id="GO:0008743">
    <property type="term" value="F:L-threonine 3-dehydrogenase activity"/>
    <property type="evidence" value="ECO:0007669"/>
    <property type="project" value="UniProtKB-UniRule"/>
</dbReference>
<dbReference type="GO" id="GO:0008270">
    <property type="term" value="F:zinc ion binding"/>
    <property type="evidence" value="ECO:0007669"/>
    <property type="project" value="UniProtKB-UniRule"/>
</dbReference>
<dbReference type="GO" id="GO:0019518">
    <property type="term" value="P:L-threonine catabolic process to glycine"/>
    <property type="evidence" value="ECO:0007669"/>
    <property type="project" value="UniProtKB-UniPathway"/>
</dbReference>
<dbReference type="Gene3D" id="3.90.180.10">
    <property type="entry name" value="Medium-chain alcohol dehydrogenases, catalytic domain"/>
    <property type="match status" value="1"/>
</dbReference>
<dbReference type="Gene3D" id="3.40.50.720">
    <property type="entry name" value="NAD(P)-binding Rossmann-like Domain"/>
    <property type="match status" value="1"/>
</dbReference>
<dbReference type="HAMAP" id="MF_00627">
    <property type="entry name" value="Thr_dehydrog"/>
    <property type="match status" value="1"/>
</dbReference>
<dbReference type="InterPro" id="IPR013149">
    <property type="entry name" value="ADH-like_C"/>
</dbReference>
<dbReference type="InterPro" id="IPR013154">
    <property type="entry name" value="ADH-like_N"/>
</dbReference>
<dbReference type="InterPro" id="IPR002328">
    <property type="entry name" value="ADH_Zn_CS"/>
</dbReference>
<dbReference type="InterPro" id="IPR011032">
    <property type="entry name" value="GroES-like_sf"/>
</dbReference>
<dbReference type="InterPro" id="IPR004627">
    <property type="entry name" value="L-Threonine_3-DHase"/>
</dbReference>
<dbReference type="InterPro" id="IPR036291">
    <property type="entry name" value="NAD(P)-bd_dom_sf"/>
</dbReference>
<dbReference type="InterPro" id="IPR020843">
    <property type="entry name" value="PKS_ER"/>
</dbReference>
<dbReference type="InterPro" id="IPR050129">
    <property type="entry name" value="Zn_alcohol_dh"/>
</dbReference>
<dbReference type="NCBIfam" id="NF003808">
    <property type="entry name" value="PRK05396.1"/>
    <property type="match status" value="1"/>
</dbReference>
<dbReference type="NCBIfam" id="TIGR00692">
    <property type="entry name" value="tdh"/>
    <property type="match status" value="1"/>
</dbReference>
<dbReference type="PANTHER" id="PTHR43401">
    <property type="entry name" value="L-THREONINE 3-DEHYDROGENASE"/>
    <property type="match status" value="1"/>
</dbReference>
<dbReference type="PANTHER" id="PTHR43401:SF2">
    <property type="entry name" value="L-THREONINE 3-DEHYDROGENASE"/>
    <property type="match status" value="1"/>
</dbReference>
<dbReference type="Pfam" id="PF08240">
    <property type="entry name" value="ADH_N"/>
    <property type="match status" value="1"/>
</dbReference>
<dbReference type="Pfam" id="PF00107">
    <property type="entry name" value="ADH_zinc_N"/>
    <property type="match status" value="1"/>
</dbReference>
<dbReference type="SMART" id="SM00829">
    <property type="entry name" value="PKS_ER"/>
    <property type="match status" value="1"/>
</dbReference>
<dbReference type="SUPFAM" id="SSF50129">
    <property type="entry name" value="GroES-like"/>
    <property type="match status" value="1"/>
</dbReference>
<dbReference type="SUPFAM" id="SSF51735">
    <property type="entry name" value="NAD(P)-binding Rossmann-fold domains"/>
    <property type="match status" value="1"/>
</dbReference>
<dbReference type="PROSITE" id="PS00059">
    <property type="entry name" value="ADH_ZINC"/>
    <property type="match status" value="1"/>
</dbReference>
<sequence length="345" mass="37443">MSNMMKALVKSKPEVGLWMEHVPVPEVGPNDVLIRVRKSAICGTDVHIWNWDQWAQKTIPVPMVVGHEFCGEIAEIGSAVTKYHVGERVSGEGHIVCGKCRNCRAGRGHLCRNTLGVGVNRPGSFGEFVCIPESNVVPIPDDIPDEVAAIFDPFGNAVHTALSFDLVGEDVLVTGAGPIGIMGAMVAKRSGARKVVITDINPNRLALAHKLGIDHVVDASKENLADVMKSIGMTEGFDVGLEMSGAAPAFRDMIDKMNNGGKIAILGIAPAGFEIDWNKVIFKMLNLKGIYGREMFETWYKMIAFVQGGLDVSPVITHRIGIDDFREGFEAMRSGNSGKVVMDWF</sequence>
<protein>
    <recommendedName>
        <fullName evidence="1">L-threonine 3-dehydrogenase</fullName>
        <shortName evidence="1">TDH</shortName>
        <ecNumber evidence="1">1.1.1.103</ecNumber>
    </recommendedName>
</protein>
<reference key="1">
    <citation type="journal article" date="2009" name="J. Bacteriol.">
        <title>Genome sequences of three Agrobacterium biovars help elucidate the evolution of multichromosome genomes in bacteria.</title>
        <authorList>
            <person name="Slater S.C."/>
            <person name="Goldman B.S."/>
            <person name="Goodner B."/>
            <person name="Setubal J.C."/>
            <person name="Farrand S.K."/>
            <person name="Nester E.W."/>
            <person name="Burr T.J."/>
            <person name="Banta L."/>
            <person name="Dickerman A.W."/>
            <person name="Paulsen I."/>
            <person name="Otten L."/>
            <person name="Suen G."/>
            <person name="Welch R."/>
            <person name="Almeida N.F."/>
            <person name="Arnold F."/>
            <person name="Burton O.T."/>
            <person name="Du Z."/>
            <person name="Ewing A."/>
            <person name="Godsy E."/>
            <person name="Heisel S."/>
            <person name="Houmiel K.L."/>
            <person name="Jhaveri J."/>
            <person name="Lu J."/>
            <person name="Miller N.M."/>
            <person name="Norton S."/>
            <person name="Chen Q."/>
            <person name="Phoolcharoen W."/>
            <person name="Ohlin V."/>
            <person name="Ondrusek D."/>
            <person name="Pride N."/>
            <person name="Stricklin S.L."/>
            <person name="Sun J."/>
            <person name="Wheeler C."/>
            <person name="Wilson L."/>
            <person name="Zhu H."/>
            <person name="Wood D.W."/>
        </authorList>
    </citation>
    <scope>NUCLEOTIDE SEQUENCE [LARGE SCALE GENOMIC DNA]</scope>
    <source>
        <strain>K84 / ATCC BAA-868</strain>
    </source>
</reference>